<feature type="chain" id="PRO_0000435772" description="Developmental and secondary metabolism regulator VEL1">
    <location>
        <begin position="1"/>
        <end position="573"/>
    </location>
</feature>
<feature type="domain" description="Velvet" evidence="2">
    <location>
        <begin position="26"/>
        <end position="220"/>
    </location>
</feature>
<feature type="region of interest" description="Disordered" evidence="3">
    <location>
        <begin position="222"/>
        <end position="520"/>
    </location>
</feature>
<feature type="region of interest" description="PEST" evidence="1">
    <location>
        <begin position="476"/>
        <end position="504"/>
    </location>
</feature>
<feature type="short sequence motif" description="Nuclear localization signal" evidence="1">
    <location>
        <begin position="40"/>
        <end position="45"/>
    </location>
</feature>
<feature type="compositionally biased region" description="Basic and acidic residues" evidence="3">
    <location>
        <begin position="230"/>
        <end position="245"/>
    </location>
</feature>
<feature type="compositionally biased region" description="Pro residues" evidence="3">
    <location>
        <begin position="291"/>
        <end position="310"/>
    </location>
</feature>
<feature type="compositionally biased region" description="Pro residues" evidence="3">
    <location>
        <begin position="341"/>
        <end position="351"/>
    </location>
</feature>
<feature type="compositionally biased region" description="Low complexity" evidence="3">
    <location>
        <begin position="352"/>
        <end position="363"/>
    </location>
</feature>
<feature type="compositionally biased region" description="Pro residues" evidence="3">
    <location>
        <begin position="379"/>
        <end position="389"/>
    </location>
</feature>
<feature type="compositionally biased region" description="Polar residues" evidence="3">
    <location>
        <begin position="432"/>
        <end position="448"/>
    </location>
</feature>
<feature type="compositionally biased region" description="Pro residues" evidence="3">
    <location>
        <begin position="458"/>
        <end position="475"/>
    </location>
</feature>
<protein>
    <recommendedName>
        <fullName evidence="7">Developmental and secondary metabolism regulator VEL1</fullName>
    </recommendedName>
    <alternativeName>
        <fullName evidence="7">Velvet complex subunit 1</fullName>
    </alternativeName>
</protein>
<comment type="function">
    <text evidence="1 5">Component of the velvet transcription factor complex that controls sexual/asexual developmental ratio in response to light, promoting sexual development in the darkness while stimulating asexual sporulation under illumination (PubMed:25386652). The velvet complex hat acts as a global regulator for secondary metabolite gene expression (By similarity). Regulates expression of the carbohydrate-active enzyme gene clusters (PubMed:25386652).</text>
</comment>
<comment type="subunit">
    <text evidence="1 4">Component of the heterotrimeric velvet complex composed of LAE1, VEL1 and VEL2; VEL1 acting as a bridging protein between LAE1 and VEL2 (By similarity). Interacts with LAE1 (PubMed:23390613).</text>
</comment>
<comment type="subcellular location">
    <subcellularLocation>
        <location evidence="1">Nucleus</location>
    </subcellularLocation>
    <subcellularLocation>
        <location evidence="1">Cytoplasm</location>
    </subcellularLocation>
    <text evidence="1">Enriched in the nucleus in the dark (By similarity).</text>
</comment>
<comment type="induction">
    <text evidence="4 5">Expression is regulated by light and darkness, but this regulation is further modulated by the carbon source in relation to the growth rate (PubMed:25386652). Expression is under the control of LAE1 (PubMed:23390613).</text>
</comment>
<comment type="domain">
    <text evidence="1">The C-terminal PEST domain is a region rich in proline, glutamic acid, serine and threonine residues that is required for the light-dependent regulation of development and secondary metabolism (By similarity).</text>
</comment>
<comment type="disruption phenotype">
    <text evidence="5">Leads to light-independent loss of conidiation and impairs formation of perithecia (PubMed:25386652). Completely impairs the expression of cellulases, xylanases and the cellulase regulator XYR1 (PubMed:25386652).</text>
</comment>
<comment type="similarity">
    <text evidence="7">Belongs to the velvet family. VeA subfamily.</text>
</comment>
<reference key="1">
    <citation type="journal article" date="2008" name="Nat. Biotechnol.">
        <title>Genome sequencing and analysis of the biomass-degrading fungus Trichoderma reesei (syn. Hypocrea jecorina).</title>
        <authorList>
            <person name="Martinez D."/>
            <person name="Berka R.M."/>
            <person name="Henrissat B."/>
            <person name="Saloheimo M."/>
            <person name="Arvas M."/>
            <person name="Baker S.E."/>
            <person name="Chapman J."/>
            <person name="Chertkov O."/>
            <person name="Coutinho P.M."/>
            <person name="Cullen D."/>
            <person name="Danchin E.G."/>
            <person name="Grigoriev I.V."/>
            <person name="Harris P."/>
            <person name="Jackson M."/>
            <person name="Kubicek C.P."/>
            <person name="Han C.S."/>
            <person name="Ho I."/>
            <person name="Larrondo L.F."/>
            <person name="de Leon A.L."/>
            <person name="Magnuson J.K."/>
            <person name="Merino S."/>
            <person name="Misra M."/>
            <person name="Nelson B."/>
            <person name="Putnam N."/>
            <person name="Robbertse B."/>
            <person name="Salamov A.A."/>
            <person name="Schmoll M."/>
            <person name="Terry A."/>
            <person name="Thayer N."/>
            <person name="Westerholm-Parvinen A."/>
            <person name="Schoch C.L."/>
            <person name="Yao J."/>
            <person name="Barabote R."/>
            <person name="Nelson M.A."/>
            <person name="Detter C."/>
            <person name="Bruce D."/>
            <person name="Kuske C.R."/>
            <person name="Xie G."/>
            <person name="Richardson P."/>
            <person name="Rokhsar D.S."/>
            <person name="Lucas S.M."/>
            <person name="Rubin E.M."/>
            <person name="Dunn-Coleman N."/>
            <person name="Ward M."/>
            <person name="Brettin T.S."/>
        </authorList>
    </citation>
    <scope>NUCLEOTIDE SEQUENCE [LARGE SCALE GENOMIC DNA]</scope>
    <source>
        <strain>QM6a</strain>
    </source>
</reference>
<reference key="2">
    <citation type="journal article" date="2013" name="G3 (Bethesda)">
        <title>Functional analyses of Trichoderma reesei LAE1 reveal conserved and contrasting roles of this regulator.</title>
        <authorList>
            <person name="Karimi-Aghcheh R."/>
            <person name="Bok J.W."/>
            <person name="Phatale P.A."/>
            <person name="Smith K.M."/>
            <person name="Baker S.E."/>
            <person name="Lichius A."/>
            <person name="Omann M."/>
            <person name="Zeilinger S."/>
            <person name="Seiboth B."/>
            <person name="Rhee C."/>
            <person name="Keller N.P."/>
            <person name="Freitag M."/>
            <person name="Kubicek C.P."/>
        </authorList>
    </citation>
    <scope>INDUCTION</scope>
    <scope>INTERACTION WITH LAE1</scope>
    <source>
        <strain>QM6a</strain>
    </source>
</reference>
<reference key="3">
    <citation type="journal article" date="2014" name="PLoS ONE">
        <title>The VELVET A orthologue VEL1 of Trichoderma reesei regulates fungal development and is essential for cellulase gene expression.</title>
        <authorList>
            <person name="Karimi Aghcheh R."/>
            <person name="Nemeth Z."/>
            <person name="Atanasova L."/>
            <person name="Fekete E."/>
            <person name="Paholcsek M."/>
            <person name="Sandor E."/>
            <person name="Aquino B."/>
            <person name="Druzhinina I.S."/>
            <person name="Karaffa L."/>
            <person name="Kubicek C.P."/>
        </authorList>
    </citation>
    <scope>INDUCTION</scope>
    <scope>FUNCTION</scope>
    <scope>DISRUPTION PHENOTYPE</scope>
</reference>
<reference key="4">
    <citation type="journal article" date="2016" name="Appl. Microbiol. Biotechnol.">
        <title>Regulation of cellulase expression, sporulation, and morphogenesis by velvet family proteins in Trichoderma reesei.</title>
        <authorList>
            <person name="Liu K."/>
            <person name="Dong Y."/>
            <person name="Wang F."/>
            <person name="Jiang B."/>
            <person name="Wang M."/>
            <person name="Fang X."/>
        </authorList>
    </citation>
    <scope>FUNCTION</scope>
    <scope>DISRUPTION PHENOTYPE</scope>
</reference>
<evidence type="ECO:0000250" key="1">
    <source>
        <dbReference type="UniProtKB" id="C8VTV4"/>
    </source>
</evidence>
<evidence type="ECO:0000255" key="2">
    <source>
        <dbReference type="PROSITE-ProRule" id="PRU01165"/>
    </source>
</evidence>
<evidence type="ECO:0000256" key="3">
    <source>
        <dbReference type="SAM" id="MobiDB-lite"/>
    </source>
</evidence>
<evidence type="ECO:0000269" key="4">
    <source>
    </source>
</evidence>
<evidence type="ECO:0000269" key="5">
    <source>
    </source>
</evidence>
<evidence type="ECO:0000303" key="6">
    <source>
    </source>
</evidence>
<evidence type="ECO:0000305" key="7"/>
<proteinExistence type="evidence at protein level"/>
<sequence length="573" mass="62878">MATPSSVASSSSRDQVQRIHRVTRENRHLWYQLTVLQQPERARACGSGMKANSDRRPVDPPPVVELRIIEGPSVEEGKDITFDYNANFFLYASLEQARTIAHGRVQNGATNNPPILTGVPASGMAYLDRPTEAGYFIFPDLSVRHEGYFRLSFSLYETTKEPKDFDLEPADSDLPPGVDWRMEIKTQPFNVFSAKKFPGLMESTSLSKTVADQGCRVRIRRDVRMRKRDGKGSGFDRRGEEEYSRRRTVTPAPAEDPNLRARSVSNASEHRGPYMPQEPPRRPSAAESYHAPPPLPPPPPSSYDAPPPAARPGHLGFGGDHNMPPQYGAPAARPYGHPQSAPIPPATPTGPYPTSSAAPSPYAKQDHHHQQQYSYNSRPPAPSASPAPPMKHAMYDNRPSEPYVPHSSPSVYASTERRPSYANYSAPAPYSTPASQPTYSTPASQPTYSTPASQPTYSAPPPAPYSAPAPPPPRPSMSQSSLAPLKIASLVSPLPPIEAQTEPLPPPPMLSTGGKRKHDHVFSQNHKPLYNGQRQLDAHYGHGYRGLTPEPDQGLYSRADGQIGVVTFNQYQV</sequence>
<dbReference type="EMBL" id="GL985066">
    <property type="protein sequence ID" value="EGR48103.1"/>
    <property type="molecule type" value="Genomic_DNA"/>
</dbReference>
<dbReference type="RefSeq" id="XP_006966146.1">
    <property type="nucleotide sequence ID" value="XM_006966084.1"/>
</dbReference>
<dbReference type="SMR" id="G0RL42"/>
<dbReference type="STRING" id="431241.G0RL42"/>
<dbReference type="EnsemblFungi" id="EGR48103">
    <property type="protein sequence ID" value="EGR48103"/>
    <property type="gene ID" value="TRIREDRAFT_122284"/>
</dbReference>
<dbReference type="GeneID" id="18483372"/>
<dbReference type="KEGG" id="tre:TRIREDRAFT_122284"/>
<dbReference type="VEuPathDB" id="FungiDB:TRIREDRAFT_122284"/>
<dbReference type="eggNOG" id="ENOG502S0HV">
    <property type="taxonomic scope" value="Eukaryota"/>
</dbReference>
<dbReference type="HOGENOM" id="CLU_022491_2_0_1"/>
<dbReference type="OrthoDB" id="5384689at2759"/>
<dbReference type="Proteomes" id="UP000008984">
    <property type="component" value="Unassembled WGS sequence"/>
</dbReference>
<dbReference type="GO" id="GO:0005737">
    <property type="term" value="C:cytoplasm"/>
    <property type="evidence" value="ECO:0007669"/>
    <property type="project" value="UniProtKB-SubCell"/>
</dbReference>
<dbReference type="GO" id="GO:0005634">
    <property type="term" value="C:nucleus"/>
    <property type="evidence" value="ECO:0007669"/>
    <property type="project" value="UniProtKB-SubCell"/>
</dbReference>
<dbReference type="GO" id="GO:0030435">
    <property type="term" value="P:sporulation resulting in formation of a cellular spore"/>
    <property type="evidence" value="ECO:0007669"/>
    <property type="project" value="UniProtKB-KW"/>
</dbReference>
<dbReference type="FunFam" id="2.60.40.3960:FF:000001">
    <property type="entry name" value="Sexual development activator VeA"/>
    <property type="match status" value="1"/>
</dbReference>
<dbReference type="Gene3D" id="2.60.40.3960">
    <property type="entry name" value="Velvet domain"/>
    <property type="match status" value="1"/>
</dbReference>
<dbReference type="InterPro" id="IPR021740">
    <property type="entry name" value="Velvet"/>
</dbReference>
<dbReference type="InterPro" id="IPR037525">
    <property type="entry name" value="Velvet_dom"/>
</dbReference>
<dbReference type="InterPro" id="IPR038491">
    <property type="entry name" value="Velvet_dom_sf"/>
</dbReference>
<dbReference type="PANTHER" id="PTHR33572:SF14">
    <property type="entry name" value="DEVELOPMENTAL AND SECONDARY METABOLISM REGULATOR VEA"/>
    <property type="match status" value="1"/>
</dbReference>
<dbReference type="PANTHER" id="PTHR33572">
    <property type="entry name" value="SPORE DEVELOPMENT REGULATOR VOSA"/>
    <property type="match status" value="1"/>
</dbReference>
<dbReference type="Pfam" id="PF11754">
    <property type="entry name" value="Velvet"/>
    <property type="match status" value="2"/>
</dbReference>
<dbReference type="PROSITE" id="PS51821">
    <property type="entry name" value="VELVET"/>
    <property type="match status" value="1"/>
</dbReference>
<accession>G0RL42</accession>
<gene>
    <name evidence="6" type="primary">VEL1</name>
    <name evidence="6" type="synonym">VeA</name>
    <name type="ORF">TRIREDRAFT_122284</name>
</gene>
<name>VEA_HYPJQ</name>
<organism>
    <name type="scientific">Hypocrea jecorina (strain QM6a)</name>
    <name type="common">Trichoderma reesei</name>
    <dbReference type="NCBI Taxonomy" id="431241"/>
    <lineage>
        <taxon>Eukaryota</taxon>
        <taxon>Fungi</taxon>
        <taxon>Dikarya</taxon>
        <taxon>Ascomycota</taxon>
        <taxon>Pezizomycotina</taxon>
        <taxon>Sordariomycetes</taxon>
        <taxon>Hypocreomycetidae</taxon>
        <taxon>Hypocreales</taxon>
        <taxon>Hypocreaceae</taxon>
        <taxon>Trichoderma</taxon>
    </lineage>
</organism>
<keyword id="KW-0963">Cytoplasm</keyword>
<keyword id="KW-0539">Nucleus</keyword>
<keyword id="KW-1185">Reference proteome</keyword>
<keyword id="KW-0749">Sporulation</keyword>
<keyword id="KW-0804">Transcription</keyword>
<keyword id="KW-0805">Transcription regulation</keyword>